<feature type="chain" id="PRO_1000195713" description="Large ribosomal subunit protein uL11">
    <location>
        <begin position="1"/>
        <end position="142"/>
    </location>
</feature>
<accession>B8EBL6</accession>
<keyword id="KW-0488">Methylation</keyword>
<keyword id="KW-0687">Ribonucleoprotein</keyword>
<keyword id="KW-0689">Ribosomal protein</keyword>
<keyword id="KW-0694">RNA-binding</keyword>
<keyword id="KW-0699">rRNA-binding</keyword>
<evidence type="ECO:0000255" key="1">
    <source>
        <dbReference type="HAMAP-Rule" id="MF_00736"/>
    </source>
</evidence>
<evidence type="ECO:0000305" key="2"/>
<comment type="function">
    <text evidence="1">Forms part of the ribosomal stalk which helps the ribosome interact with GTP-bound translation factors.</text>
</comment>
<comment type="subunit">
    <text evidence="1">Part of the ribosomal stalk of the 50S ribosomal subunit. Interacts with L10 and the large rRNA to form the base of the stalk. L10 forms an elongated spine to which L12 dimers bind in a sequential fashion forming a multimeric L10(L12)X complex.</text>
</comment>
<comment type="PTM">
    <text evidence="1">One or more lysine residues are methylated.</text>
</comment>
<comment type="similarity">
    <text evidence="1">Belongs to the universal ribosomal protein uL11 family.</text>
</comment>
<name>RL11_SHEB2</name>
<reference key="1">
    <citation type="submission" date="2008-12" db="EMBL/GenBank/DDBJ databases">
        <title>Complete sequence of chromosome of Shewanella baltica OS223.</title>
        <authorList>
            <consortium name="US DOE Joint Genome Institute"/>
            <person name="Lucas S."/>
            <person name="Copeland A."/>
            <person name="Lapidus A."/>
            <person name="Glavina del Rio T."/>
            <person name="Dalin E."/>
            <person name="Tice H."/>
            <person name="Bruce D."/>
            <person name="Goodwin L."/>
            <person name="Pitluck S."/>
            <person name="Chertkov O."/>
            <person name="Meincke L."/>
            <person name="Brettin T."/>
            <person name="Detter J.C."/>
            <person name="Han C."/>
            <person name="Kuske C.R."/>
            <person name="Larimer F."/>
            <person name="Land M."/>
            <person name="Hauser L."/>
            <person name="Kyrpides N."/>
            <person name="Ovchinnikova G."/>
            <person name="Brettar I."/>
            <person name="Rodrigues J."/>
            <person name="Konstantinidis K."/>
            <person name="Tiedje J."/>
        </authorList>
    </citation>
    <scope>NUCLEOTIDE SEQUENCE [LARGE SCALE GENOMIC DNA]</scope>
    <source>
        <strain>OS223</strain>
    </source>
</reference>
<protein>
    <recommendedName>
        <fullName evidence="1">Large ribosomal subunit protein uL11</fullName>
    </recommendedName>
    <alternativeName>
        <fullName evidence="2">50S ribosomal protein L11</fullName>
    </alternativeName>
</protein>
<proteinExistence type="inferred from homology"/>
<sequence>MAKKIDAYIKLQVKSGSANPSPPVGPALGQKGVNIMEFCKAFNARTEKMEKGMPIPVVITVYSDRSFTFETKTSPASYLLKTAAGLKSGSPRPNTQKVGTIARAKVQEIAELKAADMTGADIEAMTRSIEGTARSMGLVVED</sequence>
<gene>
    <name evidence="1" type="primary">rplK</name>
    <name type="ordered locus">Sbal223_4067</name>
</gene>
<dbReference type="EMBL" id="CP001252">
    <property type="protein sequence ID" value="ACK48540.1"/>
    <property type="molecule type" value="Genomic_DNA"/>
</dbReference>
<dbReference type="RefSeq" id="WP_006083611.1">
    <property type="nucleotide sequence ID" value="NC_011663.1"/>
</dbReference>
<dbReference type="SMR" id="B8EBL6"/>
<dbReference type="GeneID" id="11770549"/>
<dbReference type="KEGG" id="sbp:Sbal223_4067"/>
<dbReference type="HOGENOM" id="CLU_074237_2_0_6"/>
<dbReference type="Proteomes" id="UP000002507">
    <property type="component" value="Chromosome"/>
</dbReference>
<dbReference type="GO" id="GO:0022625">
    <property type="term" value="C:cytosolic large ribosomal subunit"/>
    <property type="evidence" value="ECO:0007669"/>
    <property type="project" value="TreeGrafter"/>
</dbReference>
<dbReference type="GO" id="GO:0070180">
    <property type="term" value="F:large ribosomal subunit rRNA binding"/>
    <property type="evidence" value="ECO:0007669"/>
    <property type="project" value="UniProtKB-UniRule"/>
</dbReference>
<dbReference type="GO" id="GO:0003735">
    <property type="term" value="F:structural constituent of ribosome"/>
    <property type="evidence" value="ECO:0007669"/>
    <property type="project" value="InterPro"/>
</dbReference>
<dbReference type="GO" id="GO:0006412">
    <property type="term" value="P:translation"/>
    <property type="evidence" value="ECO:0007669"/>
    <property type="project" value="UniProtKB-UniRule"/>
</dbReference>
<dbReference type="CDD" id="cd00349">
    <property type="entry name" value="Ribosomal_L11"/>
    <property type="match status" value="1"/>
</dbReference>
<dbReference type="FunFam" id="1.10.10.250:FF:000001">
    <property type="entry name" value="50S ribosomal protein L11"/>
    <property type="match status" value="1"/>
</dbReference>
<dbReference type="FunFam" id="3.30.1550.10:FF:000001">
    <property type="entry name" value="50S ribosomal protein L11"/>
    <property type="match status" value="1"/>
</dbReference>
<dbReference type="Gene3D" id="1.10.10.250">
    <property type="entry name" value="Ribosomal protein L11, C-terminal domain"/>
    <property type="match status" value="1"/>
</dbReference>
<dbReference type="Gene3D" id="3.30.1550.10">
    <property type="entry name" value="Ribosomal protein L11/L12, N-terminal domain"/>
    <property type="match status" value="1"/>
</dbReference>
<dbReference type="HAMAP" id="MF_00736">
    <property type="entry name" value="Ribosomal_uL11"/>
    <property type="match status" value="1"/>
</dbReference>
<dbReference type="InterPro" id="IPR000911">
    <property type="entry name" value="Ribosomal_uL11"/>
</dbReference>
<dbReference type="InterPro" id="IPR006519">
    <property type="entry name" value="Ribosomal_uL11_bac-typ"/>
</dbReference>
<dbReference type="InterPro" id="IPR020783">
    <property type="entry name" value="Ribosomal_uL11_C"/>
</dbReference>
<dbReference type="InterPro" id="IPR036769">
    <property type="entry name" value="Ribosomal_uL11_C_sf"/>
</dbReference>
<dbReference type="InterPro" id="IPR020785">
    <property type="entry name" value="Ribosomal_uL11_CS"/>
</dbReference>
<dbReference type="InterPro" id="IPR020784">
    <property type="entry name" value="Ribosomal_uL11_N"/>
</dbReference>
<dbReference type="InterPro" id="IPR036796">
    <property type="entry name" value="Ribosomal_uL11_N_sf"/>
</dbReference>
<dbReference type="NCBIfam" id="TIGR01632">
    <property type="entry name" value="L11_bact"/>
    <property type="match status" value="1"/>
</dbReference>
<dbReference type="PANTHER" id="PTHR11661">
    <property type="entry name" value="60S RIBOSOMAL PROTEIN L12"/>
    <property type="match status" value="1"/>
</dbReference>
<dbReference type="PANTHER" id="PTHR11661:SF1">
    <property type="entry name" value="LARGE RIBOSOMAL SUBUNIT PROTEIN UL11M"/>
    <property type="match status" value="1"/>
</dbReference>
<dbReference type="Pfam" id="PF00298">
    <property type="entry name" value="Ribosomal_L11"/>
    <property type="match status" value="1"/>
</dbReference>
<dbReference type="Pfam" id="PF03946">
    <property type="entry name" value="Ribosomal_L11_N"/>
    <property type="match status" value="1"/>
</dbReference>
<dbReference type="SMART" id="SM00649">
    <property type="entry name" value="RL11"/>
    <property type="match status" value="1"/>
</dbReference>
<dbReference type="SUPFAM" id="SSF54747">
    <property type="entry name" value="Ribosomal L11/L12e N-terminal domain"/>
    <property type="match status" value="1"/>
</dbReference>
<dbReference type="SUPFAM" id="SSF46906">
    <property type="entry name" value="Ribosomal protein L11, C-terminal domain"/>
    <property type="match status" value="1"/>
</dbReference>
<dbReference type="PROSITE" id="PS00359">
    <property type="entry name" value="RIBOSOMAL_L11"/>
    <property type="match status" value="1"/>
</dbReference>
<organism>
    <name type="scientific">Shewanella baltica (strain OS223)</name>
    <dbReference type="NCBI Taxonomy" id="407976"/>
    <lineage>
        <taxon>Bacteria</taxon>
        <taxon>Pseudomonadati</taxon>
        <taxon>Pseudomonadota</taxon>
        <taxon>Gammaproteobacteria</taxon>
        <taxon>Alteromonadales</taxon>
        <taxon>Shewanellaceae</taxon>
        <taxon>Shewanella</taxon>
    </lineage>
</organism>